<proteinExistence type="inferred from homology"/>
<evidence type="ECO:0000255" key="1">
    <source>
        <dbReference type="HAMAP-Rule" id="MF_00336"/>
    </source>
</evidence>
<reference key="1">
    <citation type="submission" date="2005-10" db="EMBL/GenBank/DDBJ databases">
        <title>Complete sequence of chromosome 1 of Burkholderia sp. 383.</title>
        <authorList>
            <consortium name="US DOE Joint Genome Institute"/>
            <person name="Copeland A."/>
            <person name="Lucas S."/>
            <person name="Lapidus A."/>
            <person name="Barry K."/>
            <person name="Detter J.C."/>
            <person name="Glavina T."/>
            <person name="Hammon N."/>
            <person name="Israni S."/>
            <person name="Pitluck S."/>
            <person name="Chain P."/>
            <person name="Malfatti S."/>
            <person name="Shin M."/>
            <person name="Vergez L."/>
            <person name="Schmutz J."/>
            <person name="Larimer F."/>
            <person name="Land M."/>
            <person name="Kyrpides N."/>
            <person name="Lykidis A."/>
            <person name="Richardson P."/>
        </authorList>
    </citation>
    <scope>NUCLEOTIDE SEQUENCE [LARGE SCALE GENOMIC DNA]</scope>
    <source>
        <strain>ATCC 17760 / DSM 23089 / LMG 22485 / NCIMB 9086 / R18194 / 383</strain>
    </source>
</reference>
<keyword id="KW-0067">ATP-binding</keyword>
<keyword id="KW-0093">Biotin biosynthesis</keyword>
<keyword id="KW-0963">Cytoplasm</keyword>
<keyword id="KW-0436">Ligase</keyword>
<keyword id="KW-0460">Magnesium</keyword>
<keyword id="KW-0479">Metal-binding</keyword>
<keyword id="KW-0547">Nucleotide-binding</keyword>
<feature type="chain" id="PRO_0000302493" description="ATP-dependent dethiobiotin synthetase BioD">
    <location>
        <begin position="1"/>
        <end position="239"/>
    </location>
</feature>
<feature type="active site" evidence="1">
    <location>
        <position position="40"/>
    </location>
</feature>
<feature type="binding site" evidence="1">
    <location>
        <begin position="15"/>
        <end position="20"/>
    </location>
    <ligand>
        <name>ATP</name>
        <dbReference type="ChEBI" id="CHEBI:30616"/>
    </ligand>
</feature>
<feature type="binding site" evidence="1">
    <location>
        <position position="19"/>
    </location>
    <ligand>
        <name>Mg(2+)</name>
        <dbReference type="ChEBI" id="CHEBI:18420"/>
    </ligand>
</feature>
<feature type="binding site" evidence="1">
    <location>
        <position position="57"/>
    </location>
    <ligand>
        <name>ATP</name>
        <dbReference type="ChEBI" id="CHEBI:30616"/>
    </ligand>
</feature>
<feature type="binding site" evidence="1">
    <location>
        <position position="57"/>
    </location>
    <ligand>
        <name>Mg(2+)</name>
        <dbReference type="ChEBI" id="CHEBI:18420"/>
    </ligand>
</feature>
<feature type="binding site" evidence="1">
    <location>
        <begin position="118"/>
        <end position="121"/>
    </location>
    <ligand>
        <name>ATP</name>
        <dbReference type="ChEBI" id="CHEBI:30616"/>
    </ligand>
</feature>
<feature type="binding site" evidence="1">
    <location>
        <position position="118"/>
    </location>
    <ligand>
        <name>Mg(2+)</name>
        <dbReference type="ChEBI" id="CHEBI:18420"/>
    </ligand>
</feature>
<feature type="binding site" evidence="1">
    <location>
        <begin position="178"/>
        <end position="179"/>
    </location>
    <ligand>
        <name>ATP</name>
        <dbReference type="ChEBI" id="CHEBI:30616"/>
    </ligand>
</feature>
<protein>
    <recommendedName>
        <fullName evidence="1">ATP-dependent dethiobiotin synthetase BioD</fullName>
        <ecNumber evidence="1">6.3.3.3</ecNumber>
    </recommendedName>
    <alternativeName>
        <fullName evidence="1">DTB synthetase</fullName>
        <shortName evidence="1">DTBS</shortName>
    </alternativeName>
    <alternativeName>
        <fullName evidence="1">Dethiobiotin synthase</fullName>
    </alternativeName>
</protein>
<organism>
    <name type="scientific">Burkholderia lata (strain ATCC 17760 / DSM 23089 / LMG 22485 / NCIMB 9086 / R18194 / 383)</name>
    <dbReference type="NCBI Taxonomy" id="482957"/>
    <lineage>
        <taxon>Bacteria</taxon>
        <taxon>Pseudomonadati</taxon>
        <taxon>Pseudomonadota</taxon>
        <taxon>Betaproteobacteria</taxon>
        <taxon>Burkholderiales</taxon>
        <taxon>Burkholderiaceae</taxon>
        <taxon>Burkholderia</taxon>
        <taxon>Burkholderia cepacia complex</taxon>
    </lineage>
</organism>
<sequence length="239" mass="25011">MTAPLSLFVTGTDTEIGKTFVSAALLHGFARHGLRAAALKPVAAGAYERDGVWRNEDADQLDAAANVVLPPELRTPFLLKAPAAPHIVAAQEGVTLDIDTIVACHREALTRADVVVVEGAGGFRVPMNDTQDLADLAVALGVPVVLVVGVRLGCINHALLTADAIAARGLKLAGWVANHVDPAMSFPDENIATMRDWLAREHGAPLLGRIPHMSPAAPESAAAMLDIAALVETLRTAQP</sequence>
<gene>
    <name evidence="1" type="primary">bioD</name>
    <name type="ordered locus">Bcep18194_A6277</name>
</gene>
<name>BIOD_BURL3</name>
<accession>Q39CE5</accession>
<comment type="function">
    <text evidence="1">Catalyzes a mechanistically unusual reaction, the ATP-dependent insertion of CO2 between the N7 and N8 nitrogen atoms of 7,8-diaminopelargonic acid (DAPA, also called 7,8-diammoniononanoate) to form a ureido ring.</text>
</comment>
<comment type="catalytic activity">
    <reaction evidence="1">
        <text>(7R,8S)-7,8-diammoniononanoate + CO2 + ATP = (4R,5S)-dethiobiotin + ADP + phosphate + 3 H(+)</text>
        <dbReference type="Rhea" id="RHEA:15805"/>
        <dbReference type="ChEBI" id="CHEBI:15378"/>
        <dbReference type="ChEBI" id="CHEBI:16526"/>
        <dbReference type="ChEBI" id="CHEBI:30616"/>
        <dbReference type="ChEBI" id="CHEBI:43474"/>
        <dbReference type="ChEBI" id="CHEBI:149469"/>
        <dbReference type="ChEBI" id="CHEBI:149473"/>
        <dbReference type="ChEBI" id="CHEBI:456216"/>
        <dbReference type="EC" id="6.3.3.3"/>
    </reaction>
</comment>
<comment type="cofactor">
    <cofactor evidence="1">
        <name>Mg(2+)</name>
        <dbReference type="ChEBI" id="CHEBI:18420"/>
    </cofactor>
</comment>
<comment type="pathway">
    <text evidence="1">Cofactor biosynthesis; biotin biosynthesis; biotin from 7,8-diaminononanoate: step 1/2.</text>
</comment>
<comment type="subunit">
    <text evidence="1">Homodimer.</text>
</comment>
<comment type="subcellular location">
    <subcellularLocation>
        <location evidence="1">Cytoplasm</location>
    </subcellularLocation>
</comment>
<comment type="similarity">
    <text evidence="1">Belongs to the dethiobiotin synthetase family.</text>
</comment>
<dbReference type="EC" id="6.3.3.3" evidence="1"/>
<dbReference type="EMBL" id="CP000151">
    <property type="protein sequence ID" value="ABB09871.1"/>
    <property type="molecule type" value="Genomic_DNA"/>
</dbReference>
<dbReference type="RefSeq" id="WP_011353377.1">
    <property type="nucleotide sequence ID" value="NC_007510.1"/>
</dbReference>
<dbReference type="SMR" id="Q39CE5"/>
<dbReference type="GeneID" id="45096149"/>
<dbReference type="KEGG" id="bur:Bcep18194_A6277"/>
<dbReference type="PATRIC" id="fig|482957.22.peg.3294"/>
<dbReference type="HOGENOM" id="CLU_072551_0_0_4"/>
<dbReference type="UniPathway" id="UPA00078">
    <property type="reaction ID" value="UER00161"/>
</dbReference>
<dbReference type="Proteomes" id="UP000002705">
    <property type="component" value="Chromosome 1"/>
</dbReference>
<dbReference type="GO" id="GO:0005829">
    <property type="term" value="C:cytosol"/>
    <property type="evidence" value="ECO:0007669"/>
    <property type="project" value="TreeGrafter"/>
</dbReference>
<dbReference type="GO" id="GO:0005524">
    <property type="term" value="F:ATP binding"/>
    <property type="evidence" value="ECO:0007669"/>
    <property type="project" value="UniProtKB-UniRule"/>
</dbReference>
<dbReference type="GO" id="GO:0004141">
    <property type="term" value="F:dethiobiotin synthase activity"/>
    <property type="evidence" value="ECO:0007669"/>
    <property type="project" value="UniProtKB-UniRule"/>
</dbReference>
<dbReference type="GO" id="GO:0000287">
    <property type="term" value="F:magnesium ion binding"/>
    <property type="evidence" value="ECO:0007669"/>
    <property type="project" value="UniProtKB-UniRule"/>
</dbReference>
<dbReference type="GO" id="GO:0009102">
    <property type="term" value="P:biotin biosynthetic process"/>
    <property type="evidence" value="ECO:0007669"/>
    <property type="project" value="UniProtKB-UniRule"/>
</dbReference>
<dbReference type="CDD" id="cd03109">
    <property type="entry name" value="DTBS"/>
    <property type="match status" value="1"/>
</dbReference>
<dbReference type="FunFam" id="3.40.50.300:FF:000292">
    <property type="entry name" value="ATP-dependent dethiobiotin synthetase BioD"/>
    <property type="match status" value="1"/>
</dbReference>
<dbReference type="Gene3D" id="3.40.50.300">
    <property type="entry name" value="P-loop containing nucleotide triphosphate hydrolases"/>
    <property type="match status" value="1"/>
</dbReference>
<dbReference type="HAMAP" id="MF_00336">
    <property type="entry name" value="BioD"/>
    <property type="match status" value="1"/>
</dbReference>
<dbReference type="InterPro" id="IPR004472">
    <property type="entry name" value="DTB_synth_BioD"/>
</dbReference>
<dbReference type="InterPro" id="IPR027417">
    <property type="entry name" value="P-loop_NTPase"/>
</dbReference>
<dbReference type="NCBIfam" id="TIGR00347">
    <property type="entry name" value="bioD"/>
    <property type="match status" value="1"/>
</dbReference>
<dbReference type="PANTHER" id="PTHR43210">
    <property type="entry name" value="DETHIOBIOTIN SYNTHETASE"/>
    <property type="match status" value="1"/>
</dbReference>
<dbReference type="PANTHER" id="PTHR43210:SF5">
    <property type="entry name" value="DETHIOBIOTIN SYNTHETASE"/>
    <property type="match status" value="1"/>
</dbReference>
<dbReference type="Pfam" id="PF13500">
    <property type="entry name" value="AAA_26"/>
    <property type="match status" value="1"/>
</dbReference>
<dbReference type="PIRSF" id="PIRSF006755">
    <property type="entry name" value="DTB_synth"/>
    <property type="match status" value="1"/>
</dbReference>
<dbReference type="SUPFAM" id="SSF52540">
    <property type="entry name" value="P-loop containing nucleoside triphosphate hydrolases"/>
    <property type="match status" value="1"/>
</dbReference>